<sequence length="273" mass="31902">MAATVPRFDDVYKNAQRRILDQETFFSRGLSRPLMKNTYLFDNYAYGWIPETAIWSSRYANLDASDYYPISLGLLKKFEFLMSLYKGPIPVYEEKVNTEFIANGSFSGRYVSYLRKFSALPTNEFISFLLLTSIPIYNILFWFKNTQFDITKHTLFRYVYTDNTKHLALARYIHQTGDYKPLFSRLKENYIFTGPVPIGIKDIDHPNLSRARSPSDYETLANISTILYFTKYDPVLMFLLFYVPGYSITTKITPAVEYLMDKLNLTKSDVQLL</sequence>
<comment type="function">
    <text evidence="1">May play a role in the biogenesis of the viral factories by recruiting and wrapping DNA replication sites in endoplasmic reticulum derived membranes. Later in infection, phosphorylation by the late viral kinase OPG054 might decrease DNA-binding ability and trigger ER membranes disassembly. Binds DNA in vitro.</text>
</comment>
<comment type="subcellular location">
    <subcellularLocation>
        <location evidence="1">Virion</location>
    </subcellularLocation>
    <subcellularLocation>
        <location evidence="1">Host endoplasmic reticulum membrane</location>
        <topology evidence="1">Multi-pass membrane protein</topology>
    </subcellularLocation>
    <subcellularLocation>
        <location evidence="1">Host cytoplasm</location>
    </subcellularLocation>
    <text evidence="1">Localizes to the inside membrane of cytoplasmic virus factories. Component of the core of mature virions.</text>
</comment>
<comment type="induction">
    <text evidence="1">Expressed in the intermediate phase of the viral replicative cycle.</text>
</comment>
<comment type="PTM">
    <text evidence="1">Phosphorylated by OPG054 kinase in vitro.</text>
</comment>
<comment type="similarity">
    <text evidence="3">Belongs to the orthopoxvirus OPG070 family.</text>
</comment>
<proteinExistence type="inferred from homology"/>
<organism>
    <name type="scientific">Monkeypox virus</name>
    <dbReference type="NCBI Taxonomy" id="10244"/>
    <lineage>
        <taxon>Viruses</taxon>
        <taxon>Varidnaviria</taxon>
        <taxon>Bamfordvirae</taxon>
        <taxon>Nucleocytoviricota</taxon>
        <taxon>Pokkesviricetes</taxon>
        <taxon>Chitovirales</taxon>
        <taxon>Poxviridae</taxon>
        <taxon>Chordopoxvirinae</taxon>
        <taxon>Orthopoxvirus</taxon>
    </lineage>
</organism>
<reference key="1">
    <citation type="journal article" date="2022" name="J. Infect. Dis.">
        <title>Exportation of Monkeypox virus from the African continent.</title>
        <authorList>
            <person name="Mauldin M.R."/>
            <person name="McCollum A.M."/>
            <person name="Nakazawa Y.J."/>
            <person name="Mandra A."/>
            <person name="Whitehouse E.R."/>
            <person name="Davidson W."/>
            <person name="Zhao H."/>
            <person name="Gao J."/>
            <person name="Li Y."/>
            <person name="Doty J."/>
            <person name="Yinka-Ogunleye A."/>
            <person name="Akinpelu A."/>
            <person name="Aruna O."/>
            <person name="Naidoo D."/>
            <person name="Lewandowski K."/>
            <person name="Afrough B."/>
            <person name="Graham V."/>
            <person name="Aarons E."/>
            <person name="Hewson R."/>
            <person name="Vipond R."/>
            <person name="Dunning J."/>
            <person name="Chand M."/>
            <person name="Brown C."/>
            <person name="Cohen-Gihon I."/>
            <person name="Erez N."/>
            <person name="Shifman O."/>
            <person name="Israeli O."/>
            <person name="Sharon M."/>
            <person name="Schwartz E."/>
            <person name="Beth-Din A."/>
            <person name="Zvi A."/>
            <person name="Mak T.M."/>
            <person name="Ng Y.K."/>
            <person name="Cui L."/>
            <person name="Lin R.T.P."/>
            <person name="Olson V.A."/>
            <person name="Brooks T."/>
            <person name="Paran N."/>
            <person name="Ihekweazu C."/>
            <person name="Reynolds M.G."/>
        </authorList>
    </citation>
    <scope>NUCLEOTIDE SEQUENCE [LARGE SCALE GENOMIC DNA]</scope>
    <source>
        <strain>MPXV-M5312_HM12_Rivers</strain>
    </source>
</reference>
<dbReference type="EMBL" id="MT903340">
    <property type="protein sequence ID" value="QNP12926.1"/>
    <property type="molecule type" value="Genomic_DNA"/>
</dbReference>
<dbReference type="RefSeq" id="YP_010377053.1">
    <property type="nucleotide sequence ID" value="NC_063383.1"/>
</dbReference>
<dbReference type="GeneID" id="72551465"/>
<dbReference type="Proteomes" id="UP000516359">
    <property type="component" value="Genome"/>
</dbReference>
<dbReference type="GO" id="GO:0044167">
    <property type="term" value="C:host cell endoplasmic reticulum membrane"/>
    <property type="evidence" value="ECO:0007669"/>
    <property type="project" value="UniProtKB-SubCell"/>
</dbReference>
<dbReference type="GO" id="GO:0016020">
    <property type="term" value="C:membrane"/>
    <property type="evidence" value="ECO:0007669"/>
    <property type="project" value="UniProtKB-KW"/>
</dbReference>
<dbReference type="GO" id="GO:0044423">
    <property type="term" value="C:virion component"/>
    <property type="evidence" value="ECO:0007669"/>
    <property type="project" value="UniProtKB-KW"/>
</dbReference>
<dbReference type="InterPro" id="IPR005057">
    <property type="entry name" value="Poxvirus_E8"/>
</dbReference>
<dbReference type="Pfam" id="PF03394">
    <property type="entry name" value="Pox_E8"/>
    <property type="match status" value="1"/>
</dbReference>
<dbReference type="PIRSF" id="PIRSF015690">
    <property type="entry name" value="VAC_E8R"/>
    <property type="match status" value="1"/>
</dbReference>
<accession>A0A7H0DN43</accession>
<organismHost>
    <name type="scientific">Cynomys gunnisoni</name>
    <name type="common">Gunnison's prairie dog</name>
    <name type="synonym">Spermophilus gunnisoni</name>
    <dbReference type="NCBI Taxonomy" id="45479"/>
</organismHost>
<organismHost>
    <name type="scientific">Cynomys leucurus</name>
    <name type="common">White-tailed prairie dog</name>
    <dbReference type="NCBI Taxonomy" id="99825"/>
</organismHost>
<organismHost>
    <name type="scientific">Cynomys ludovicianus</name>
    <name type="common">Black-tailed prairie dog</name>
    <dbReference type="NCBI Taxonomy" id="45480"/>
</organismHost>
<organismHost>
    <name type="scientific">Cynomys mexicanus</name>
    <name type="common">Mexican prairie dog</name>
    <dbReference type="NCBI Taxonomy" id="99826"/>
</organismHost>
<organismHost>
    <name type="scientific">Cynomys parvidens</name>
    <name type="common">Utah prairie dog</name>
    <dbReference type="NCBI Taxonomy" id="99827"/>
</organismHost>
<organismHost>
    <name type="scientific">Gliridae</name>
    <name type="common">dormice</name>
    <dbReference type="NCBI Taxonomy" id="30650"/>
</organismHost>
<organismHost>
    <name type="scientific">Heliosciurus ruwenzorii</name>
    <name type="common">Ruwenzori sun squirrel</name>
    <dbReference type="NCBI Taxonomy" id="226685"/>
</organismHost>
<organismHost>
    <name type="scientific">Homo sapiens</name>
    <name type="common">Human</name>
    <dbReference type="NCBI Taxonomy" id="9606"/>
</organismHost>
<organismHost>
    <name type="scientific">Mus musculus</name>
    <name type="common">Mouse</name>
    <dbReference type="NCBI Taxonomy" id="10090"/>
</organismHost>
<evidence type="ECO:0000250" key="1">
    <source>
        <dbReference type="UniProtKB" id="P23372"/>
    </source>
</evidence>
<evidence type="ECO:0000255" key="2"/>
<evidence type="ECO:0000305" key="3"/>
<protein>
    <recommendedName>
        <fullName>Protein OPG070</fullName>
    </recommendedName>
</protein>
<keyword id="KW-1035">Host cytoplasm</keyword>
<keyword id="KW-1038">Host endoplasmic reticulum</keyword>
<keyword id="KW-1043">Host membrane</keyword>
<keyword id="KW-0472">Membrane</keyword>
<keyword id="KW-0597">Phosphoprotein</keyword>
<keyword id="KW-1185">Reference proteome</keyword>
<keyword id="KW-0812">Transmembrane</keyword>
<keyword id="KW-1133">Transmembrane helix</keyword>
<keyword id="KW-0946">Virion</keyword>
<feature type="chain" id="PRO_0000457697" description="Protein OPG070">
    <location>
        <begin position="1"/>
        <end position="273"/>
    </location>
</feature>
<feature type="transmembrane region" description="Helical" evidence="2">
    <location>
        <begin position="123"/>
        <end position="143"/>
    </location>
</feature>
<gene>
    <name type="primary">OPG070</name>
    <name type="ORF">MPXVgp056</name>
</gene>
<name>PG070_MONPV</name>